<feature type="chain" id="PRO_0000217897" description="Photosystem II reaction center protein T">
    <location>
        <begin position="1"/>
        <end position="35"/>
    </location>
</feature>
<feature type="transmembrane region" description="Helical" evidence="1">
    <location>
        <begin position="3"/>
        <end position="23"/>
    </location>
</feature>
<accession>Q9GE34</accession>
<dbReference type="EMBL" id="AF235042">
    <property type="protein sequence ID" value="AAG44371.1"/>
    <property type="molecule type" value="Genomic_DNA"/>
</dbReference>
<dbReference type="EMBL" id="AJ506156">
    <property type="protein sequence ID" value="CAD45133.1"/>
    <property type="molecule type" value="Genomic_DNA"/>
</dbReference>
<dbReference type="RefSeq" id="NP_904125.1">
    <property type="nucleotide sequence ID" value="NC_005086.1"/>
</dbReference>
<dbReference type="SMR" id="Q9GE34"/>
<dbReference type="STRING" id="13333.Q9GE34"/>
<dbReference type="GeneID" id="2597960"/>
<dbReference type="KEGG" id="atr:2597960"/>
<dbReference type="OrthoDB" id="1558483at2759"/>
<dbReference type="Proteomes" id="UP000017836">
    <property type="component" value="Chloroplast"/>
</dbReference>
<dbReference type="GO" id="GO:0009535">
    <property type="term" value="C:chloroplast thylakoid membrane"/>
    <property type="evidence" value="ECO:0007669"/>
    <property type="project" value="UniProtKB-SubCell"/>
</dbReference>
<dbReference type="GO" id="GO:0009539">
    <property type="term" value="C:photosystem II reaction center"/>
    <property type="evidence" value="ECO:0007669"/>
    <property type="project" value="InterPro"/>
</dbReference>
<dbReference type="GO" id="GO:0015979">
    <property type="term" value="P:photosynthesis"/>
    <property type="evidence" value="ECO:0007669"/>
    <property type="project" value="UniProtKB-UniRule"/>
</dbReference>
<dbReference type="HAMAP" id="MF_00808">
    <property type="entry name" value="PSII_PsbT"/>
    <property type="match status" value="1"/>
</dbReference>
<dbReference type="InterPro" id="IPR001743">
    <property type="entry name" value="PSII_PsbT"/>
</dbReference>
<dbReference type="InterPro" id="IPR037268">
    <property type="entry name" value="PSII_PsbT_sf"/>
</dbReference>
<dbReference type="PANTHER" id="PTHR36411">
    <property type="match status" value="1"/>
</dbReference>
<dbReference type="PANTHER" id="PTHR36411:SF2">
    <property type="entry name" value="PHOTOSYSTEM II REACTION CENTER PROTEIN T"/>
    <property type="match status" value="1"/>
</dbReference>
<dbReference type="Pfam" id="PF01405">
    <property type="entry name" value="PsbT"/>
    <property type="match status" value="1"/>
</dbReference>
<dbReference type="SUPFAM" id="SSF161029">
    <property type="entry name" value="Photosystem II reaction center protein T, PsbT"/>
    <property type="match status" value="1"/>
</dbReference>
<gene>
    <name evidence="1" type="primary">psbT</name>
</gene>
<proteinExistence type="inferred from homology"/>
<evidence type="ECO:0000255" key="1">
    <source>
        <dbReference type="HAMAP-Rule" id="MF_00808"/>
    </source>
</evidence>
<keyword id="KW-0150">Chloroplast</keyword>
<keyword id="KW-0472">Membrane</keyword>
<keyword id="KW-0602">Photosynthesis</keyword>
<keyword id="KW-0604">Photosystem II</keyword>
<keyword id="KW-0934">Plastid</keyword>
<keyword id="KW-1185">Reference proteome</keyword>
<keyword id="KW-0793">Thylakoid</keyword>
<keyword id="KW-0812">Transmembrane</keyword>
<keyword id="KW-1133">Transmembrane helix</keyword>
<sequence>MEALVYTFLLVSTLGIIFFAIFFREPPKVPNKKIK</sequence>
<organism>
    <name type="scientific">Amborella trichopoda</name>
    <dbReference type="NCBI Taxonomy" id="13333"/>
    <lineage>
        <taxon>Eukaryota</taxon>
        <taxon>Viridiplantae</taxon>
        <taxon>Streptophyta</taxon>
        <taxon>Embryophyta</taxon>
        <taxon>Tracheophyta</taxon>
        <taxon>Spermatophyta</taxon>
        <taxon>Magnoliopsida</taxon>
        <taxon>Amborellales</taxon>
        <taxon>Amborellaceae</taxon>
        <taxon>Amborella</taxon>
    </lineage>
</organism>
<comment type="function">
    <text evidence="1">Found at the monomer-monomer interface of the photosystem II (PS II) dimer, plays a role in assembly and dimerization of PSII. PSII is a light-driven water plastoquinone oxidoreductase, using light energy to abstract electrons from H(2)O, generating a proton gradient subsequently used for ATP formation.</text>
</comment>
<comment type="subunit">
    <text evidence="1">PSII is composed of 1 copy each of membrane proteins PsbA, PsbB, PsbC, PsbD, PsbE, PsbF, PsbH, PsbI, PsbJ, PsbK, PsbL, PsbM, PsbT, PsbY, PsbZ, Psb30/Ycf12, at least 3 peripheral proteins of the oxygen-evolving complex and a large number of cofactors. It forms dimeric complexes.</text>
</comment>
<comment type="subcellular location">
    <subcellularLocation>
        <location evidence="1">Plastid</location>
        <location evidence="1">Chloroplast thylakoid membrane</location>
        <topology evidence="1">Single-pass membrane protein</topology>
    </subcellularLocation>
</comment>
<comment type="similarity">
    <text evidence="1">Belongs to the PsbT family.</text>
</comment>
<name>PSBT_AMBTC</name>
<protein>
    <recommendedName>
        <fullName evidence="1">Photosystem II reaction center protein T</fullName>
        <shortName evidence="1">PSII-T</shortName>
    </recommendedName>
</protein>
<geneLocation type="chloroplast"/>
<reference key="1">
    <citation type="journal article" date="2000" name="Am. J. Bot.">
        <title>Utility of 17 chloroplast genes for inferring the phylogeny of the basal angiosperms.</title>
        <authorList>
            <person name="Graham S.W."/>
            <person name="Olmstead R.G."/>
        </authorList>
    </citation>
    <scope>NUCLEOTIDE SEQUENCE [GENOMIC DNA]</scope>
</reference>
<reference key="2">
    <citation type="journal article" date="2003" name="Mol. Biol. Evol.">
        <title>Analysis of the Amborella trichopoda chloroplast genome sequence suggests that Amborella is not a basal angiosperm.</title>
        <authorList>
            <person name="Goremykin V.V."/>
            <person name="Hirsch-Ernst K.I."/>
            <person name="Wolfl S."/>
            <person name="Hellwig F.H."/>
        </authorList>
    </citation>
    <scope>NUCLEOTIDE SEQUENCE [LARGE SCALE GENOMIC DNA]</scope>
</reference>